<gene>
    <name evidence="1" type="primary">htpX</name>
    <name type="ordered locus">SAK_1641</name>
</gene>
<name>HTPX_STRA1</name>
<accession>Q3JZQ9</accession>
<proteinExistence type="inferred from homology"/>
<feature type="chain" id="PRO_1000020949" description="Protease HtpX homolog">
    <location>
        <begin position="1"/>
        <end position="296"/>
    </location>
</feature>
<feature type="transmembrane region" description="Helical" evidence="1">
    <location>
        <begin position="14"/>
        <end position="34"/>
    </location>
</feature>
<feature type="transmembrane region" description="Helical" evidence="1">
    <location>
        <begin position="39"/>
        <end position="59"/>
    </location>
</feature>
<feature type="transmembrane region" description="Helical" evidence="1">
    <location>
        <begin position="158"/>
        <end position="178"/>
    </location>
</feature>
<feature type="transmembrane region" description="Helical" evidence="1">
    <location>
        <begin position="195"/>
        <end position="215"/>
    </location>
</feature>
<feature type="active site" evidence="1">
    <location>
        <position position="144"/>
    </location>
</feature>
<feature type="binding site" evidence="1">
    <location>
        <position position="143"/>
    </location>
    <ligand>
        <name>Zn(2+)</name>
        <dbReference type="ChEBI" id="CHEBI:29105"/>
        <note>catalytic</note>
    </ligand>
</feature>
<feature type="binding site" evidence="1">
    <location>
        <position position="147"/>
    </location>
    <ligand>
        <name>Zn(2+)</name>
        <dbReference type="ChEBI" id="CHEBI:29105"/>
        <note>catalytic</note>
    </ligand>
</feature>
<feature type="binding site" evidence="1">
    <location>
        <position position="224"/>
    </location>
    <ligand>
        <name>Zn(2+)</name>
        <dbReference type="ChEBI" id="CHEBI:29105"/>
        <note>catalytic</note>
    </ligand>
</feature>
<sequence length="296" mass="32371">MLYQQIASNKRKTVVLLIVFFCLLAAIGAAVGYLVLGSYQFGLVLALIIGVIYAVSMIFQSTNVVMSMNNAREVTEDEAPNYFHIVEDMAMIAQIPMPRVFIVEDDSLNAFATGSKPENAAVAATTGLLAVMNREELEGVIGHEVSHIRNYDIRISTIAVALASAVTLISSIGSRMLFYGGGRRRDDDREDGGNILVLIFSILSLILAPLAASLVQLAISRQREYLADASSVELTRNPQGMISALEKLDRSEPMGHPVDDASAALYINDPTKKEGLKSLFYTHPPIADRIERLRHM</sequence>
<keyword id="KW-1003">Cell membrane</keyword>
<keyword id="KW-0378">Hydrolase</keyword>
<keyword id="KW-0472">Membrane</keyword>
<keyword id="KW-0479">Metal-binding</keyword>
<keyword id="KW-0482">Metalloprotease</keyword>
<keyword id="KW-0645">Protease</keyword>
<keyword id="KW-0812">Transmembrane</keyword>
<keyword id="KW-1133">Transmembrane helix</keyword>
<keyword id="KW-0862">Zinc</keyword>
<protein>
    <recommendedName>
        <fullName evidence="1">Protease HtpX homolog</fullName>
        <ecNumber evidence="1">3.4.24.-</ecNumber>
    </recommendedName>
</protein>
<dbReference type="EC" id="3.4.24.-" evidence="1"/>
<dbReference type="EMBL" id="CP000114">
    <property type="protein sequence ID" value="ABA44556.1"/>
    <property type="molecule type" value="Genomic_DNA"/>
</dbReference>
<dbReference type="RefSeq" id="WP_000966817.1">
    <property type="nucleotide sequence ID" value="NC_007432.1"/>
</dbReference>
<dbReference type="GeneID" id="66886471"/>
<dbReference type="KEGG" id="sak:SAK_1641"/>
<dbReference type="HOGENOM" id="CLU_042266_2_1_9"/>
<dbReference type="GO" id="GO:0005886">
    <property type="term" value="C:plasma membrane"/>
    <property type="evidence" value="ECO:0007669"/>
    <property type="project" value="UniProtKB-SubCell"/>
</dbReference>
<dbReference type="GO" id="GO:0004222">
    <property type="term" value="F:metalloendopeptidase activity"/>
    <property type="evidence" value="ECO:0007669"/>
    <property type="project" value="UniProtKB-UniRule"/>
</dbReference>
<dbReference type="GO" id="GO:0008270">
    <property type="term" value="F:zinc ion binding"/>
    <property type="evidence" value="ECO:0007669"/>
    <property type="project" value="UniProtKB-UniRule"/>
</dbReference>
<dbReference type="GO" id="GO:0006508">
    <property type="term" value="P:proteolysis"/>
    <property type="evidence" value="ECO:0007669"/>
    <property type="project" value="UniProtKB-KW"/>
</dbReference>
<dbReference type="CDD" id="cd07340">
    <property type="entry name" value="M48B_Htpx_like"/>
    <property type="match status" value="1"/>
</dbReference>
<dbReference type="Gene3D" id="3.30.2010.10">
    <property type="entry name" value="Metalloproteases ('zincins'), catalytic domain"/>
    <property type="match status" value="1"/>
</dbReference>
<dbReference type="HAMAP" id="MF_00188">
    <property type="entry name" value="Pept_M48_protease_HtpX"/>
    <property type="match status" value="1"/>
</dbReference>
<dbReference type="InterPro" id="IPR050083">
    <property type="entry name" value="HtpX_protease"/>
</dbReference>
<dbReference type="InterPro" id="IPR022919">
    <property type="entry name" value="Pept_M48_protease_HtpX"/>
</dbReference>
<dbReference type="InterPro" id="IPR001915">
    <property type="entry name" value="Peptidase_M48"/>
</dbReference>
<dbReference type="NCBIfam" id="NF003425">
    <property type="entry name" value="PRK04897.1"/>
    <property type="match status" value="1"/>
</dbReference>
<dbReference type="PANTHER" id="PTHR43221">
    <property type="entry name" value="PROTEASE HTPX"/>
    <property type="match status" value="1"/>
</dbReference>
<dbReference type="PANTHER" id="PTHR43221:SF1">
    <property type="entry name" value="PROTEASE HTPX"/>
    <property type="match status" value="1"/>
</dbReference>
<dbReference type="Pfam" id="PF01435">
    <property type="entry name" value="Peptidase_M48"/>
    <property type="match status" value="1"/>
</dbReference>
<evidence type="ECO:0000255" key="1">
    <source>
        <dbReference type="HAMAP-Rule" id="MF_00188"/>
    </source>
</evidence>
<comment type="cofactor">
    <cofactor evidence="1">
        <name>Zn(2+)</name>
        <dbReference type="ChEBI" id="CHEBI:29105"/>
    </cofactor>
    <text evidence="1">Binds 1 zinc ion per subunit.</text>
</comment>
<comment type="subcellular location">
    <subcellularLocation>
        <location evidence="1">Cell membrane</location>
        <topology evidence="1">Multi-pass membrane protein</topology>
    </subcellularLocation>
</comment>
<comment type="similarity">
    <text evidence="1">Belongs to the peptidase M48B family.</text>
</comment>
<reference key="1">
    <citation type="journal article" date="2005" name="Proc. Natl. Acad. Sci. U.S.A.">
        <title>Genome analysis of multiple pathogenic isolates of Streptococcus agalactiae: implications for the microbial 'pan-genome'.</title>
        <authorList>
            <person name="Tettelin H."/>
            <person name="Masignani V."/>
            <person name="Cieslewicz M.J."/>
            <person name="Donati C."/>
            <person name="Medini D."/>
            <person name="Ward N.L."/>
            <person name="Angiuoli S.V."/>
            <person name="Crabtree J."/>
            <person name="Jones A.L."/>
            <person name="Durkin A.S."/>
            <person name="DeBoy R.T."/>
            <person name="Davidsen T.M."/>
            <person name="Mora M."/>
            <person name="Scarselli M."/>
            <person name="Margarit y Ros I."/>
            <person name="Peterson J.D."/>
            <person name="Hauser C.R."/>
            <person name="Sundaram J.P."/>
            <person name="Nelson W.C."/>
            <person name="Madupu R."/>
            <person name="Brinkac L.M."/>
            <person name="Dodson R.J."/>
            <person name="Rosovitz M.J."/>
            <person name="Sullivan S.A."/>
            <person name="Daugherty S.C."/>
            <person name="Haft D.H."/>
            <person name="Selengut J."/>
            <person name="Gwinn M.L."/>
            <person name="Zhou L."/>
            <person name="Zafar N."/>
            <person name="Khouri H."/>
            <person name="Radune D."/>
            <person name="Dimitrov G."/>
            <person name="Watkins K."/>
            <person name="O'Connor K.J."/>
            <person name="Smith S."/>
            <person name="Utterback T.R."/>
            <person name="White O."/>
            <person name="Rubens C.E."/>
            <person name="Grandi G."/>
            <person name="Madoff L.C."/>
            <person name="Kasper D.L."/>
            <person name="Telford J.L."/>
            <person name="Wessels M.R."/>
            <person name="Rappuoli R."/>
            <person name="Fraser C.M."/>
        </authorList>
    </citation>
    <scope>NUCLEOTIDE SEQUENCE [LARGE SCALE GENOMIC DNA]</scope>
    <source>
        <strain>ATCC 27591 / A909 / CDC SS700</strain>
    </source>
</reference>
<organism>
    <name type="scientific">Streptococcus agalactiae serotype Ia (strain ATCC 27591 / A909 / CDC SS700)</name>
    <dbReference type="NCBI Taxonomy" id="205921"/>
    <lineage>
        <taxon>Bacteria</taxon>
        <taxon>Bacillati</taxon>
        <taxon>Bacillota</taxon>
        <taxon>Bacilli</taxon>
        <taxon>Lactobacillales</taxon>
        <taxon>Streptococcaceae</taxon>
        <taxon>Streptococcus</taxon>
    </lineage>
</organism>